<feature type="chain" id="PRO_0000161290" description="Fumarate hydratase class II">
    <location>
        <begin position="1"/>
        <end position="466"/>
    </location>
</feature>
<feature type="region of interest" description="Disordered" evidence="2">
    <location>
        <begin position="122"/>
        <end position="143"/>
    </location>
</feature>
<feature type="compositionally biased region" description="Basic and acidic residues" evidence="2">
    <location>
        <begin position="122"/>
        <end position="137"/>
    </location>
</feature>
<feature type="active site" description="Proton donor/acceptor" evidence="1">
    <location>
        <position position="190"/>
    </location>
</feature>
<feature type="active site" evidence="1">
    <location>
        <position position="320"/>
    </location>
</feature>
<feature type="binding site" evidence="1">
    <location>
        <begin position="100"/>
        <end position="102"/>
    </location>
    <ligand>
        <name>substrate</name>
    </ligand>
</feature>
<feature type="binding site" evidence="1">
    <location>
        <position position="128"/>
    </location>
    <ligand>
        <name>substrate</name>
    </ligand>
</feature>
<feature type="binding site" description="in site B" evidence="1">
    <location>
        <begin position="131"/>
        <end position="134"/>
    </location>
    <ligand>
        <name>substrate</name>
    </ligand>
</feature>
<feature type="binding site" evidence="1">
    <location>
        <begin position="141"/>
        <end position="143"/>
    </location>
    <ligand>
        <name>substrate</name>
    </ligand>
</feature>
<feature type="binding site" evidence="1">
    <location>
        <position position="189"/>
    </location>
    <ligand>
        <name>substrate</name>
    </ligand>
</feature>
<feature type="binding site" evidence="1">
    <location>
        <position position="321"/>
    </location>
    <ligand>
        <name>substrate</name>
    </ligand>
</feature>
<feature type="binding site" evidence="1">
    <location>
        <begin position="326"/>
        <end position="328"/>
    </location>
    <ligand>
        <name>substrate</name>
    </ligand>
</feature>
<feature type="site" description="Important for catalytic activity" evidence="1">
    <location>
        <position position="333"/>
    </location>
</feature>
<accession>P95331</accession>
<accession>Q1CYG0</accession>
<evidence type="ECO:0000255" key="1">
    <source>
        <dbReference type="HAMAP-Rule" id="MF_00743"/>
    </source>
</evidence>
<evidence type="ECO:0000256" key="2">
    <source>
        <dbReference type="SAM" id="MobiDB-lite"/>
    </source>
</evidence>
<sequence length="466" mass="49913">MSTKNVRTEKDTFGPIDVPADRLWGAQTQRSLQNFAISTERMPLALIRALVLVKKAAARVNVENGSLAKEKGEAIIRAADEVLAGQHDAEFPLSVWQTGSGTQTNMNTNEVLANRASELLGGERGERRKVHPNDDVNKGQSSNDVFPTAMSVAAVAAITEHVLPELKALRDVLAQKARAFHDVVKVGRTHLQDATPLTLGQEVGGFVAQLDHAKGHLERTLPHLLELALGGTAVGTGLNAPKGYAERVAQELAQLTGHPFVTAPNKFEALAANDALVQAHGALKGLAAVLFKVANDVRWLSSGPRSGLAEITIPENEPGSSIMPGKVNPTQSEALTMLCAQVMGNDVAVTVGGASGNFQLNVFKPLIAHNLLQSCRLLADGMRSFRLHCAVGIEPNRPRIQENLERSLMLVTALNPHIGYDNAAKIAKTAHRDGTTLKETAVALGLVTPEQFDQWVRPEDMTGHKG</sequence>
<organism>
    <name type="scientific">Myxococcus xanthus (strain DK1622)</name>
    <dbReference type="NCBI Taxonomy" id="246197"/>
    <lineage>
        <taxon>Bacteria</taxon>
        <taxon>Pseudomonadati</taxon>
        <taxon>Myxococcota</taxon>
        <taxon>Myxococcia</taxon>
        <taxon>Myxococcales</taxon>
        <taxon>Cystobacterineae</taxon>
        <taxon>Myxococcaceae</taxon>
        <taxon>Myxococcus</taxon>
    </lineage>
</organism>
<protein>
    <recommendedName>
        <fullName evidence="1">Fumarate hydratase class II</fullName>
        <shortName evidence="1">Fumarase C</shortName>
        <ecNumber evidence="1">4.2.1.2</ecNumber>
    </recommendedName>
    <alternativeName>
        <fullName evidence="1">Aerobic fumarase</fullName>
    </alternativeName>
    <alternativeName>
        <fullName evidence="1">Iron-independent fumarase</fullName>
    </alternativeName>
</protein>
<reference key="1">
    <citation type="submission" date="1997-07" db="EMBL/GenBank/DDBJ databases">
        <title>Myxococcus xanthus fumarate hydratase, major proteosome subunit, and acyl-CoA oxidase genes.</title>
        <authorList>
            <person name="Salmi D."/>
            <person name="Creighton C."/>
            <person name="Youderian P."/>
        </authorList>
    </citation>
    <scope>NUCLEOTIDE SEQUENCE [GENOMIC DNA]</scope>
</reference>
<reference key="2">
    <citation type="journal article" date="2006" name="Proc. Natl. Acad. Sci. U.S.A.">
        <title>Evolution of sensory complexity recorded in a myxobacterial genome.</title>
        <authorList>
            <person name="Goldman B.S."/>
            <person name="Nierman W.C."/>
            <person name="Kaiser D."/>
            <person name="Slater S.C."/>
            <person name="Durkin A.S."/>
            <person name="Eisen J.A."/>
            <person name="Ronning C.M."/>
            <person name="Barbazuk W.B."/>
            <person name="Blanchard M."/>
            <person name="Field C."/>
            <person name="Halling C."/>
            <person name="Hinkle G."/>
            <person name="Iartchuk O."/>
            <person name="Kim H.S."/>
            <person name="Mackenzie C."/>
            <person name="Madupu R."/>
            <person name="Miller N."/>
            <person name="Shvartsbeyn A."/>
            <person name="Sullivan S.A."/>
            <person name="Vaudin M."/>
            <person name="Wiegand R."/>
            <person name="Kaplan H.B."/>
        </authorList>
    </citation>
    <scope>NUCLEOTIDE SEQUENCE [LARGE SCALE GENOMIC DNA]</scope>
    <source>
        <strain>DK1622</strain>
    </source>
</reference>
<dbReference type="EC" id="4.2.1.2" evidence="1"/>
<dbReference type="EMBL" id="AF013216">
    <property type="protein sequence ID" value="AAB97818.1"/>
    <property type="molecule type" value="Genomic_DNA"/>
</dbReference>
<dbReference type="EMBL" id="CP000113">
    <property type="protein sequence ID" value="ABF86177.1"/>
    <property type="molecule type" value="Genomic_DNA"/>
</dbReference>
<dbReference type="RefSeq" id="WP_011556371.1">
    <property type="nucleotide sequence ID" value="NC_008095.1"/>
</dbReference>
<dbReference type="SMR" id="P95331"/>
<dbReference type="STRING" id="246197.MXAN_6439"/>
<dbReference type="EnsemblBacteria" id="ABF86177">
    <property type="protein sequence ID" value="ABF86177"/>
    <property type="gene ID" value="MXAN_6439"/>
</dbReference>
<dbReference type="GeneID" id="41363648"/>
<dbReference type="KEGG" id="mxa:MXAN_6439"/>
<dbReference type="eggNOG" id="COG0114">
    <property type="taxonomic scope" value="Bacteria"/>
</dbReference>
<dbReference type="HOGENOM" id="CLU_021594_4_1_7"/>
<dbReference type="OrthoDB" id="9802809at2"/>
<dbReference type="UniPathway" id="UPA00223">
    <property type="reaction ID" value="UER01007"/>
</dbReference>
<dbReference type="Proteomes" id="UP000002402">
    <property type="component" value="Chromosome"/>
</dbReference>
<dbReference type="GO" id="GO:0005737">
    <property type="term" value="C:cytoplasm"/>
    <property type="evidence" value="ECO:0007669"/>
    <property type="project" value="UniProtKB-SubCell"/>
</dbReference>
<dbReference type="GO" id="GO:0004333">
    <property type="term" value="F:fumarate hydratase activity"/>
    <property type="evidence" value="ECO:0007669"/>
    <property type="project" value="UniProtKB-UniRule"/>
</dbReference>
<dbReference type="GO" id="GO:0006106">
    <property type="term" value="P:fumarate metabolic process"/>
    <property type="evidence" value="ECO:0007669"/>
    <property type="project" value="InterPro"/>
</dbReference>
<dbReference type="GO" id="GO:0006108">
    <property type="term" value="P:malate metabolic process"/>
    <property type="evidence" value="ECO:0007669"/>
    <property type="project" value="TreeGrafter"/>
</dbReference>
<dbReference type="GO" id="GO:0006099">
    <property type="term" value="P:tricarboxylic acid cycle"/>
    <property type="evidence" value="ECO:0007669"/>
    <property type="project" value="UniProtKB-UniRule"/>
</dbReference>
<dbReference type="CDD" id="cd01362">
    <property type="entry name" value="Fumarase_classII"/>
    <property type="match status" value="1"/>
</dbReference>
<dbReference type="FunFam" id="1.10.40.30:FF:000002">
    <property type="entry name" value="Fumarate hydratase class II"/>
    <property type="match status" value="1"/>
</dbReference>
<dbReference type="FunFam" id="1.10.275.10:FF:000001">
    <property type="entry name" value="Fumarate hydratase, mitochondrial"/>
    <property type="match status" value="1"/>
</dbReference>
<dbReference type="FunFam" id="1.20.200.10:FF:000001">
    <property type="entry name" value="Fumarate hydratase, mitochondrial"/>
    <property type="match status" value="1"/>
</dbReference>
<dbReference type="Gene3D" id="1.10.40.30">
    <property type="entry name" value="Fumarase/aspartase (C-terminal domain)"/>
    <property type="match status" value="1"/>
</dbReference>
<dbReference type="Gene3D" id="1.20.200.10">
    <property type="entry name" value="Fumarase/aspartase (Central domain)"/>
    <property type="match status" value="1"/>
</dbReference>
<dbReference type="Gene3D" id="1.10.275.10">
    <property type="entry name" value="Fumarase/aspartase (N-terminal domain)"/>
    <property type="match status" value="1"/>
</dbReference>
<dbReference type="HAMAP" id="MF_00743">
    <property type="entry name" value="FumaraseC"/>
    <property type="match status" value="1"/>
</dbReference>
<dbReference type="InterPro" id="IPR005677">
    <property type="entry name" value="Fum_hydII"/>
</dbReference>
<dbReference type="InterPro" id="IPR024083">
    <property type="entry name" value="Fumarase/histidase_N"/>
</dbReference>
<dbReference type="InterPro" id="IPR018951">
    <property type="entry name" value="Fumarase_C_C"/>
</dbReference>
<dbReference type="InterPro" id="IPR020557">
    <property type="entry name" value="Fumarate_lyase_CS"/>
</dbReference>
<dbReference type="InterPro" id="IPR000362">
    <property type="entry name" value="Fumarate_lyase_fam"/>
</dbReference>
<dbReference type="InterPro" id="IPR022761">
    <property type="entry name" value="Fumarate_lyase_N"/>
</dbReference>
<dbReference type="InterPro" id="IPR008948">
    <property type="entry name" value="L-Aspartase-like"/>
</dbReference>
<dbReference type="NCBIfam" id="TIGR00979">
    <property type="entry name" value="fumC_II"/>
    <property type="match status" value="1"/>
</dbReference>
<dbReference type="NCBIfam" id="NF008909">
    <property type="entry name" value="PRK12273.1"/>
    <property type="match status" value="1"/>
</dbReference>
<dbReference type="PANTHER" id="PTHR11444">
    <property type="entry name" value="ASPARTATEAMMONIA/ARGININOSUCCINATE/ADENYLOSUCCINATE LYASE"/>
    <property type="match status" value="1"/>
</dbReference>
<dbReference type="PANTHER" id="PTHR11444:SF1">
    <property type="entry name" value="FUMARATE HYDRATASE, MITOCHONDRIAL"/>
    <property type="match status" value="1"/>
</dbReference>
<dbReference type="Pfam" id="PF10415">
    <property type="entry name" value="FumaraseC_C"/>
    <property type="match status" value="1"/>
</dbReference>
<dbReference type="Pfam" id="PF00206">
    <property type="entry name" value="Lyase_1"/>
    <property type="match status" value="1"/>
</dbReference>
<dbReference type="PRINTS" id="PR00145">
    <property type="entry name" value="ARGSUCLYASE"/>
</dbReference>
<dbReference type="PRINTS" id="PR00149">
    <property type="entry name" value="FUMRATELYASE"/>
</dbReference>
<dbReference type="SUPFAM" id="SSF48557">
    <property type="entry name" value="L-aspartase-like"/>
    <property type="match status" value="1"/>
</dbReference>
<dbReference type="PROSITE" id="PS00163">
    <property type="entry name" value="FUMARATE_LYASES"/>
    <property type="match status" value="1"/>
</dbReference>
<name>FUMC_MYXXD</name>
<gene>
    <name evidence="1" type="primary">fumC</name>
    <name type="synonym">fhy</name>
    <name type="ordered locus">MXAN_6439</name>
</gene>
<keyword id="KW-0963">Cytoplasm</keyword>
<keyword id="KW-0456">Lyase</keyword>
<keyword id="KW-1185">Reference proteome</keyword>
<keyword id="KW-0816">Tricarboxylic acid cycle</keyword>
<comment type="function">
    <text evidence="1">Involved in the TCA cycle. Catalyzes the stereospecific interconversion of fumarate to L-malate.</text>
</comment>
<comment type="catalytic activity">
    <reaction evidence="1">
        <text>(S)-malate = fumarate + H2O</text>
        <dbReference type="Rhea" id="RHEA:12460"/>
        <dbReference type="ChEBI" id="CHEBI:15377"/>
        <dbReference type="ChEBI" id="CHEBI:15589"/>
        <dbReference type="ChEBI" id="CHEBI:29806"/>
        <dbReference type="EC" id="4.2.1.2"/>
    </reaction>
</comment>
<comment type="pathway">
    <text evidence="1">Carbohydrate metabolism; tricarboxylic acid cycle; (S)-malate from fumarate: step 1/1.</text>
</comment>
<comment type="subunit">
    <text evidence="1">Homotetramer.</text>
</comment>
<comment type="subcellular location">
    <subcellularLocation>
        <location evidence="1">Cytoplasm</location>
    </subcellularLocation>
</comment>
<comment type="miscellaneous">
    <text evidence="1">There are 2 substrate-binding sites: the catalytic A site, and the non-catalytic B site that may play a role in the transfer of substrate or product between the active site and the solvent. Alternatively, the B site may bind allosteric effectors.</text>
</comment>
<comment type="similarity">
    <text evidence="1">Belongs to the class-II fumarase/aspartase family. Fumarase subfamily.</text>
</comment>
<proteinExistence type="inferred from homology"/>